<protein>
    <recommendedName>
        <fullName evidence="1">Aspartyl/glutamyl-tRNA(Asn/Gln) amidotransferase subunit B</fullName>
        <shortName evidence="1">Asp/Glu-ADT subunit B</shortName>
        <ecNumber evidence="1">6.3.5.-</ecNumber>
    </recommendedName>
</protein>
<reference key="1">
    <citation type="submission" date="2004-12" db="EMBL/GenBank/DDBJ databases">
        <title>The genome sequence of Borrelia hermsii and Borrelia turicatae: comparative analysis of two agents of endemic N. America relapsing fever.</title>
        <authorList>
            <person name="Porcella S.F."/>
            <person name="Raffel S.J."/>
            <person name="Schrumpf M.E."/>
            <person name="Montgomery B."/>
            <person name="Smith T."/>
            <person name="Schwan T.G."/>
        </authorList>
    </citation>
    <scope>NUCLEOTIDE SEQUENCE [LARGE SCALE GENOMIC DNA]</scope>
    <source>
        <strain>91E135</strain>
    </source>
</reference>
<feature type="chain" id="PRO_1000122511" description="Aspartyl/glutamyl-tRNA(Asn/Gln) amidotransferase subunit B">
    <location>
        <begin position="1"/>
        <end position="485"/>
    </location>
</feature>
<accession>A1QZD3</accession>
<name>GATB_BORT9</name>
<gene>
    <name evidence="1" type="primary">gatB</name>
    <name type="ordered locus">BT0341</name>
</gene>
<evidence type="ECO:0000255" key="1">
    <source>
        <dbReference type="HAMAP-Rule" id="MF_00121"/>
    </source>
</evidence>
<proteinExistence type="inferred from homology"/>
<dbReference type="EC" id="6.3.5.-" evidence="1"/>
<dbReference type="EMBL" id="CP000049">
    <property type="protein sequence ID" value="AAX17675.1"/>
    <property type="molecule type" value="Genomic_DNA"/>
</dbReference>
<dbReference type="RefSeq" id="WP_011772294.1">
    <property type="nucleotide sequence ID" value="NC_008710.1"/>
</dbReference>
<dbReference type="SMR" id="A1QZD3"/>
<dbReference type="KEGG" id="btu:BT0341"/>
<dbReference type="eggNOG" id="COG0064">
    <property type="taxonomic scope" value="Bacteria"/>
</dbReference>
<dbReference type="HOGENOM" id="CLU_019240_0_0_12"/>
<dbReference type="Proteomes" id="UP000001205">
    <property type="component" value="Chromosome"/>
</dbReference>
<dbReference type="GO" id="GO:0050566">
    <property type="term" value="F:asparaginyl-tRNA synthase (glutamine-hydrolyzing) activity"/>
    <property type="evidence" value="ECO:0007669"/>
    <property type="project" value="RHEA"/>
</dbReference>
<dbReference type="GO" id="GO:0005524">
    <property type="term" value="F:ATP binding"/>
    <property type="evidence" value="ECO:0007669"/>
    <property type="project" value="UniProtKB-KW"/>
</dbReference>
<dbReference type="GO" id="GO:0050567">
    <property type="term" value="F:glutaminyl-tRNA synthase (glutamine-hydrolyzing) activity"/>
    <property type="evidence" value="ECO:0007669"/>
    <property type="project" value="UniProtKB-UniRule"/>
</dbReference>
<dbReference type="GO" id="GO:0070681">
    <property type="term" value="P:glutaminyl-tRNAGln biosynthesis via transamidation"/>
    <property type="evidence" value="ECO:0007669"/>
    <property type="project" value="TreeGrafter"/>
</dbReference>
<dbReference type="GO" id="GO:0006412">
    <property type="term" value="P:translation"/>
    <property type="evidence" value="ECO:0007669"/>
    <property type="project" value="UniProtKB-UniRule"/>
</dbReference>
<dbReference type="FunFam" id="1.10.10.410:FF:000001">
    <property type="entry name" value="Aspartyl/glutamyl-tRNA(Asn/Gln) amidotransferase subunit B"/>
    <property type="match status" value="1"/>
</dbReference>
<dbReference type="Gene3D" id="1.10.10.410">
    <property type="match status" value="1"/>
</dbReference>
<dbReference type="HAMAP" id="MF_00121">
    <property type="entry name" value="GatB"/>
    <property type="match status" value="1"/>
</dbReference>
<dbReference type="InterPro" id="IPR017959">
    <property type="entry name" value="Asn/Gln-tRNA_amidoTrfase_suB/E"/>
</dbReference>
<dbReference type="InterPro" id="IPR006075">
    <property type="entry name" value="Asn/Gln-tRNA_Trfase_suB/E_cat"/>
</dbReference>
<dbReference type="InterPro" id="IPR018027">
    <property type="entry name" value="Asn/Gln_amidotransferase"/>
</dbReference>
<dbReference type="InterPro" id="IPR003789">
    <property type="entry name" value="Asn/Gln_tRNA_amidoTrase-B-like"/>
</dbReference>
<dbReference type="InterPro" id="IPR004413">
    <property type="entry name" value="GatB"/>
</dbReference>
<dbReference type="InterPro" id="IPR023168">
    <property type="entry name" value="GatB_Yqey_C_2"/>
</dbReference>
<dbReference type="InterPro" id="IPR017958">
    <property type="entry name" value="Gln-tRNA_amidoTrfase_suB_CS"/>
</dbReference>
<dbReference type="InterPro" id="IPR014746">
    <property type="entry name" value="Gln_synth/guanido_kin_cat_dom"/>
</dbReference>
<dbReference type="NCBIfam" id="TIGR00133">
    <property type="entry name" value="gatB"/>
    <property type="match status" value="1"/>
</dbReference>
<dbReference type="NCBIfam" id="NF004012">
    <property type="entry name" value="PRK05477.1-2"/>
    <property type="match status" value="1"/>
</dbReference>
<dbReference type="NCBIfam" id="NF004014">
    <property type="entry name" value="PRK05477.1-4"/>
    <property type="match status" value="1"/>
</dbReference>
<dbReference type="PANTHER" id="PTHR11659">
    <property type="entry name" value="GLUTAMYL-TRNA GLN AMIDOTRANSFERASE SUBUNIT B MITOCHONDRIAL AND PROKARYOTIC PET112-RELATED"/>
    <property type="match status" value="1"/>
</dbReference>
<dbReference type="PANTHER" id="PTHR11659:SF0">
    <property type="entry name" value="GLUTAMYL-TRNA(GLN) AMIDOTRANSFERASE SUBUNIT B, MITOCHONDRIAL"/>
    <property type="match status" value="1"/>
</dbReference>
<dbReference type="Pfam" id="PF02934">
    <property type="entry name" value="GatB_N"/>
    <property type="match status" value="1"/>
</dbReference>
<dbReference type="Pfam" id="PF02637">
    <property type="entry name" value="GatB_Yqey"/>
    <property type="match status" value="1"/>
</dbReference>
<dbReference type="SMART" id="SM00845">
    <property type="entry name" value="GatB_Yqey"/>
    <property type="match status" value="1"/>
</dbReference>
<dbReference type="SUPFAM" id="SSF89095">
    <property type="entry name" value="GatB/YqeY motif"/>
    <property type="match status" value="1"/>
</dbReference>
<dbReference type="SUPFAM" id="SSF55931">
    <property type="entry name" value="Glutamine synthetase/guanido kinase"/>
    <property type="match status" value="1"/>
</dbReference>
<dbReference type="PROSITE" id="PS01234">
    <property type="entry name" value="GATB"/>
    <property type="match status" value="1"/>
</dbReference>
<organism>
    <name type="scientific">Borrelia turicatae (strain 91E135)</name>
    <dbReference type="NCBI Taxonomy" id="314724"/>
    <lineage>
        <taxon>Bacteria</taxon>
        <taxon>Pseudomonadati</taxon>
        <taxon>Spirochaetota</taxon>
        <taxon>Spirochaetia</taxon>
        <taxon>Spirochaetales</taxon>
        <taxon>Borreliaceae</taxon>
        <taxon>Borrelia</taxon>
    </lineage>
</organism>
<keyword id="KW-0067">ATP-binding</keyword>
<keyword id="KW-0436">Ligase</keyword>
<keyword id="KW-0547">Nucleotide-binding</keyword>
<keyword id="KW-0648">Protein biosynthesis</keyword>
<keyword id="KW-1185">Reference proteome</keyword>
<sequence length="485" mass="55011">MEYKLLVGLEVHVQLGLKTKAFCGCKNDFGGIPNSRTCPTCLGLPGALPSINKELISSAILAGHATNSKIKNIIKFDRKHYAYPDLPKGYQISQNDAPICENGFIFIETCSGLKKINIIRIHMEEDSGKSLHLLESENRSYIDFNRSGAPLLEIVSNPDINNGEEAVAYLSALREIFRYLDLSDCNMENGSFRCDVNVNLLINENGVEYKTPISEIKNLNSFKSVKLAIDYEKSRQKEEWILHRRTFESVGKHTMGFDDKKGITVLQRSKETVADYRYIKDPDLPLIKLDDSYIESIKSNRMVELPFDTRVRLKEQYGLSDFDVVTLTADKNLVKYFEEAAIASSDPKRVANWILSEVLSVLNDREMNILDFNLPPSYISELVEFIVNDRVSGKIAKEIFLEMLERNVSSAIIINEKNLAQISDISFIESVVFEVLNENPKSIELYKKGKSHAIKFMMGQIMRKTSGRVNPVLANEILMNKLRDV</sequence>
<comment type="function">
    <text evidence="1">Allows the formation of correctly charged Asn-tRNA(Asn) or Gln-tRNA(Gln) through the transamidation of misacylated Asp-tRNA(Asn) or Glu-tRNA(Gln) in organisms which lack either or both of asparaginyl-tRNA or glutaminyl-tRNA synthetases. The reaction takes place in the presence of glutamine and ATP through an activated phospho-Asp-tRNA(Asn) or phospho-Glu-tRNA(Gln).</text>
</comment>
<comment type="catalytic activity">
    <reaction evidence="1">
        <text>L-glutamyl-tRNA(Gln) + L-glutamine + ATP + H2O = L-glutaminyl-tRNA(Gln) + L-glutamate + ADP + phosphate + H(+)</text>
        <dbReference type="Rhea" id="RHEA:17521"/>
        <dbReference type="Rhea" id="RHEA-COMP:9681"/>
        <dbReference type="Rhea" id="RHEA-COMP:9684"/>
        <dbReference type="ChEBI" id="CHEBI:15377"/>
        <dbReference type="ChEBI" id="CHEBI:15378"/>
        <dbReference type="ChEBI" id="CHEBI:29985"/>
        <dbReference type="ChEBI" id="CHEBI:30616"/>
        <dbReference type="ChEBI" id="CHEBI:43474"/>
        <dbReference type="ChEBI" id="CHEBI:58359"/>
        <dbReference type="ChEBI" id="CHEBI:78520"/>
        <dbReference type="ChEBI" id="CHEBI:78521"/>
        <dbReference type="ChEBI" id="CHEBI:456216"/>
    </reaction>
</comment>
<comment type="catalytic activity">
    <reaction evidence="1">
        <text>L-aspartyl-tRNA(Asn) + L-glutamine + ATP + H2O = L-asparaginyl-tRNA(Asn) + L-glutamate + ADP + phosphate + 2 H(+)</text>
        <dbReference type="Rhea" id="RHEA:14513"/>
        <dbReference type="Rhea" id="RHEA-COMP:9674"/>
        <dbReference type="Rhea" id="RHEA-COMP:9677"/>
        <dbReference type="ChEBI" id="CHEBI:15377"/>
        <dbReference type="ChEBI" id="CHEBI:15378"/>
        <dbReference type="ChEBI" id="CHEBI:29985"/>
        <dbReference type="ChEBI" id="CHEBI:30616"/>
        <dbReference type="ChEBI" id="CHEBI:43474"/>
        <dbReference type="ChEBI" id="CHEBI:58359"/>
        <dbReference type="ChEBI" id="CHEBI:78515"/>
        <dbReference type="ChEBI" id="CHEBI:78516"/>
        <dbReference type="ChEBI" id="CHEBI:456216"/>
    </reaction>
</comment>
<comment type="subunit">
    <text evidence="1">Heterotrimer of A, B and C subunits.</text>
</comment>
<comment type="similarity">
    <text evidence="1">Belongs to the GatB/GatE family. GatB subfamily.</text>
</comment>